<proteinExistence type="inferred from homology"/>
<name>FPG_AGRFC</name>
<organism>
    <name type="scientific">Agrobacterium fabrum (strain C58 / ATCC 33970)</name>
    <name type="common">Agrobacterium tumefaciens (strain C58)</name>
    <dbReference type="NCBI Taxonomy" id="176299"/>
    <lineage>
        <taxon>Bacteria</taxon>
        <taxon>Pseudomonadati</taxon>
        <taxon>Pseudomonadota</taxon>
        <taxon>Alphaproteobacteria</taxon>
        <taxon>Hyphomicrobiales</taxon>
        <taxon>Rhizobiaceae</taxon>
        <taxon>Rhizobium/Agrobacterium group</taxon>
        <taxon>Agrobacterium</taxon>
        <taxon>Agrobacterium tumefaciens complex</taxon>
    </lineage>
</organism>
<gene>
    <name type="primary">mutM</name>
    <name type="synonym">fpg</name>
    <name type="ordered locus">Atu0321</name>
    <name type="ORF">AGR_C_561</name>
</gene>
<protein>
    <recommendedName>
        <fullName>Formamidopyrimidine-DNA glycosylase</fullName>
        <shortName>Fapy-DNA glycosylase</shortName>
        <ecNumber>3.2.2.23</ecNumber>
    </recommendedName>
    <alternativeName>
        <fullName>DNA-(apurinic or apyrimidinic site) lyase MutM</fullName>
        <shortName>AP lyase MutM</shortName>
        <ecNumber>4.2.99.18</ecNumber>
    </alternativeName>
</protein>
<sequence length="298" mass="32661">MPELPEVETVRRGLAPAMEGARVRKLHLGRPDLRFPFPADFAGLIEGKTIISLGRRAKYLLIELEDGLTIVSHLGMSGSFRIEAEKGEGGEAPGAFHYARSKDGKHDHVVFHLDKGEERVCVIYNDPRRFGFMHLVERNKLDLYPAFAELGPEPTGNALSADYLASRFEGKSQPLKSTLLDQKIIAGLGNIYVCEALWRAHLSPLRAAGTLVTTRGKPKAQLIDLTEKIRDVIADAIAAGGSSLRDHIQTDGTLGYFQHSFSVYDQEGQPCRTPGCGGTVERVVQAGRSTFYCAACQK</sequence>
<keyword id="KW-0227">DNA damage</keyword>
<keyword id="KW-0234">DNA repair</keyword>
<keyword id="KW-0238">DNA-binding</keyword>
<keyword id="KW-0326">Glycosidase</keyword>
<keyword id="KW-0378">Hydrolase</keyword>
<keyword id="KW-0456">Lyase</keyword>
<keyword id="KW-0479">Metal-binding</keyword>
<keyword id="KW-0511">Multifunctional enzyme</keyword>
<keyword id="KW-1185">Reference proteome</keyword>
<keyword id="KW-0862">Zinc</keyword>
<keyword id="KW-0863">Zinc-finger</keyword>
<evidence type="ECO:0000250" key="1"/>
<evidence type="ECO:0000305" key="2"/>
<accession>Q8UIH4</accession>
<reference key="1">
    <citation type="journal article" date="2001" name="Science">
        <title>The genome of the natural genetic engineer Agrobacterium tumefaciens C58.</title>
        <authorList>
            <person name="Wood D.W."/>
            <person name="Setubal J.C."/>
            <person name="Kaul R."/>
            <person name="Monks D.E."/>
            <person name="Kitajima J.P."/>
            <person name="Okura V.K."/>
            <person name="Zhou Y."/>
            <person name="Chen L."/>
            <person name="Wood G.E."/>
            <person name="Almeida N.F. Jr."/>
            <person name="Woo L."/>
            <person name="Chen Y."/>
            <person name="Paulsen I.T."/>
            <person name="Eisen J.A."/>
            <person name="Karp P.D."/>
            <person name="Bovee D. Sr."/>
            <person name="Chapman P."/>
            <person name="Clendenning J."/>
            <person name="Deatherage G."/>
            <person name="Gillet W."/>
            <person name="Grant C."/>
            <person name="Kutyavin T."/>
            <person name="Levy R."/>
            <person name="Li M.-J."/>
            <person name="McClelland E."/>
            <person name="Palmieri A."/>
            <person name="Raymond C."/>
            <person name="Rouse G."/>
            <person name="Saenphimmachak C."/>
            <person name="Wu Z."/>
            <person name="Romero P."/>
            <person name="Gordon D."/>
            <person name="Zhang S."/>
            <person name="Yoo H."/>
            <person name="Tao Y."/>
            <person name="Biddle P."/>
            <person name="Jung M."/>
            <person name="Krespan W."/>
            <person name="Perry M."/>
            <person name="Gordon-Kamm B."/>
            <person name="Liao L."/>
            <person name="Kim S."/>
            <person name="Hendrick C."/>
            <person name="Zhao Z.-Y."/>
            <person name="Dolan M."/>
            <person name="Chumley F."/>
            <person name="Tingey S.V."/>
            <person name="Tomb J.-F."/>
            <person name="Gordon M.P."/>
            <person name="Olson M.V."/>
            <person name="Nester E.W."/>
        </authorList>
    </citation>
    <scope>NUCLEOTIDE SEQUENCE [LARGE SCALE GENOMIC DNA]</scope>
    <source>
        <strain>C58 / ATCC 33970</strain>
    </source>
</reference>
<reference key="2">
    <citation type="journal article" date="2001" name="Science">
        <title>Genome sequence of the plant pathogen and biotechnology agent Agrobacterium tumefaciens C58.</title>
        <authorList>
            <person name="Goodner B."/>
            <person name="Hinkle G."/>
            <person name="Gattung S."/>
            <person name="Miller N."/>
            <person name="Blanchard M."/>
            <person name="Qurollo B."/>
            <person name="Goldman B.S."/>
            <person name="Cao Y."/>
            <person name="Askenazi M."/>
            <person name="Halling C."/>
            <person name="Mullin L."/>
            <person name="Houmiel K."/>
            <person name="Gordon J."/>
            <person name="Vaudin M."/>
            <person name="Iartchouk O."/>
            <person name="Epp A."/>
            <person name="Liu F."/>
            <person name="Wollam C."/>
            <person name="Allinger M."/>
            <person name="Doughty D."/>
            <person name="Scott C."/>
            <person name="Lappas C."/>
            <person name="Markelz B."/>
            <person name="Flanagan C."/>
            <person name="Crowell C."/>
            <person name="Gurson J."/>
            <person name="Lomo C."/>
            <person name="Sear C."/>
            <person name="Strub G."/>
            <person name="Cielo C."/>
            <person name="Slater S."/>
        </authorList>
    </citation>
    <scope>NUCLEOTIDE SEQUENCE [LARGE SCALE GENOMIC DNA]</scope>
    <source>
        <strain>C58 / ATCC 33970</strain>
    </source>
</reference>
<dbReference type="EC" id="3.2.2.23"/>
<dbReference type="EC" id="4.2.99.18"/>
<dbReference type="EMBL" id="AE007869">
    <property type="protein sequence ID" value="AAK86137.2"/>
    <property type="molecule type" value="Genomic_DNA"/>
</dbReference>
<dbReference type="PIR" id="AI2615">
    <property type="entry name" value="AI2615"/>
</dbReference>
<dbReference type="PIR" id="H97397">
    <property type="entry name" value="H97397"/>
</dbReference>
<dbReference type="RefSeq" id="NP_353352.2">
    <property type="nucleotide sequence ID" value="NC_003062.2"/>
</dbReference>
<dbReference type="RefSeq" id="WP_010970818.1">
    <property type="nucleotide sequence ID" value="NC_003062.2"/>
</dbReference>
<dbReference type="SMR" id="Q8UIH4"/>
<dbReference type="STRING" id="176299.Atu0321"/>
<dbReference type="EnsemblBacteria" id="AAK86137">
    <property type="protein sequence ID" value="AAK86137"/>
    <property type="gene ID" value="Atu0321"/>
</dbReference>
<dbReference type="GeneID" id="1132359"/>
<dbReference type="KEGG" id="atu:Atu0321"/>
<dbReference type="PATRIC" id="fig|176299.10.peg.313"/>
<dbReference type="eggNOG" id="COG0266">
    <property type="taxonomic scope" value="Bacteria"/>
</dbReference>
<dbReference type="HOGENOM" id="CLU_038423_1_1_5"/>
<dbReference type="OrthoDB" id="9800855at2"/>
<dbReference type="PhylomeDB" id="Q8UIH4"/>
<dbReference type="BioCyc" id="AGRO:ATU0321-MONOMER"/>
<dbReference type="Proteomes" id="UP000000813">
    <property type="component" value="Chromosome circular"/>
</dbReference>
<dbReference type="GO" id="GO:0034039">
    <property type="term" value="F:8-oxo-7,8-dihydroguanine DNA N-glycosylase activity"/>
    <property type="evidence" value="ECO:0007669"/>
    <property type="project" value="TreeGrafter"/>
</dbReference>
<dbReference type="GO" id="GO:0140078">
    <property type="term" value="F:class I DNA-(apurinic or apyrimidinic site) endonuclease activity"/>
    <property type="evidence" value="ECO:0007669"/>
    <property type="project" value="UniProtKB-EC"/>
</dbReference>
<dbReference type="GO" id="GO:0003684">
    <property type="term" value="F:damaged DNA binding"/>
    <property type="evidence" value="ECO:0007669"/>
    <property type="project" value="InterPro"/>
</dbReference>
<dbReference type="GO" id="GO:0008270">
    <property type="term" value="F:zinc ion binding"/>
    <property type="evidence" value="ECO:0007669"/>
    <property type="project" value="UniProtKB-UniRule"/>
</dbReference>
<dbReference type="GO" id="GO:0006284">
    <property type="term" value="P:base-excision repair"/>
    <property type="evidence" value="ECO:0007669"/>
    <property type="project" value="InterPro"/>
</dbReference>
<dbReference type="CDD" id="cd08966">
    <property type="entry name" value="EcFpg-like_N"/>
    <property type="match status" value="1"/>
</dbReference>
<dbReference type="FunFam" id="1.10.8.50:FF:000003">
    <property type="entry name" value="Formamidopyrimidine-DNA glycosylase"/>
    <property type="match status" value="1"/>
</dbReference>
<dbReference type="Gene3D" id="1.10.8.50">
    <property type="match status" value="1"/>
</dbReference>
<dbReference type="Gene3D" id="3.20.190.10">
    <property type="entry name" value="MutM-like, N-terminal"/>
    <property type="match status" value="1"/>
</dbReference>
<dbReference type="HAMAP" id="MF_00103">
    <property type="entry name" value="Fapy_DNA_glycosyl"/>
    <property type="match status" value="1"/>
</dbReference>
<dbReference type="InterPro" id="IPR015886">
    <property type="entry name" value="DNA_glyclase/AP_lyase_DNA-bd"/>
</dbReference>
<dbReference type="InterPro" id="IPR015887">
    <property type="entry name" value="DNA_glyclase_Znf_dom_DNA_BS"/>
</dbReference>
<dbReference type="InterPro" id="IPR020629">
    <property type="entry name" value="Formamido-pyr_DNA_Glyclase"/>
</dbReference>
<dbReference type="InterPro" id="IPR012319">
    <property type="entry name" value="FPG_cat"/>
</dbReference>
<dbReference type="InterPro" id="IPR035937">
    <property type="entry name" value="MutM-like_N-ter"/>
</dbReference>
<dbReference type="InterPro" id="IPR010979">
    <property type="entry name" value="Ribosomal_uS13-like_H2TH"/>
</dbReference>
<dbReference type="InterPro" id="IPR000214">
    <property type="entry name" value="Znf_DNA_glyclase/AP_lyase"/>
</dbReference>
<dbReference type="InterPro" id="IPR010663">
    <property type="entry name" value="Znf_FPG/IleRS"/>
</dbReference>
<dbReference type="NCBIfam" id="TIGR00577">
    <property type="entry name" value="fpg"/>
    <property type="match status" value="1"/>
</dbReference>
<dbReference type="NCBIfam" id="NF002211">
    <property type="entry name" value="PRK01103.1"/>
    <property type="match status" value="1"/>
</dbReference>
<dbReference type="PANTHER" id="PTHR22993">
    <property type="entry name" value="FORMAMIDOPYRIMIDINE-DNA GLYCOSYLASE"/>
    <property type="match status" value="1"/>
</dbReference>
<dbReference type="PANTHER" id="PTHR22993:SF9">
    <property type="entry name" value="FORMAMIDOPYRIMIDINE-DNA GLYCOSYLASE"/>
    <property type="match status" value="1"/>
</dbReference>
<dbReference type="Pfam" id="PF01149">
    <property type="entry name" value="Fapy_DNA_glyco"/>
    <property type="match status" value="1"/>
</dbReference>
<dbReference type="Pfam" id="PF06831">
    <property type="entry name" value="H2TH"/>
    <property type="match status" value="1"/>
</dbReference>
<dbReference type="Pfam" id="PF06827">
    <property type="entry name" value="zf-FPG_IleRS"/>
    <property type="match status" value="1"/>
</dbReference>
<dbReference type="SMART" id="SM00898">
    <property type="entry name" value="Fapy_DNA_glyco"/>
    <property type="match status" value="1"/>
</dbReference>
<dbReference type="SMART" id="SM01232">
    <property type="entry name" value="H2TH"/>
    <property type="match status" value="1"/>
</dbReference>
<dbReference type="SUPFAM" id="SSF57716">
    <property type="entry name" value="Glucocorticoid receptor-like (DNA-binding domain)"/>
    <property type="match status" value="1"/>
</dbReference>
<dbReference type="SUPFAM" id="SSF81624">
    <property type="entry name" value="N-terminal domain of MutM-like DNA repair proteins"/>
    <property type="match status" value="1"/>
</dbReference>
<dbReference type="SUPFAM" id="SSF46946">
    <property type="entry name" value="S13-like H2TH domain"/>
    <property type="match status" value="1"/>
</dbReference>
<dbReference type="PROSITE" id="PS51068">
    <property type="entry name" value="FPG_CAT"/>
    <property type="match status" value="1"/>
</dbReference>
<dbReference type="PROSITE" id="PS01242">
    <property type="entry name" value="ZF_FPG_1"/>
    <property type="match status" value="1"/>
</dbReference>
<dbReference type="PROSITE" id="PS51066">
    <property type="entry name" value="ZF_FPG_2"/>
    <property type="match status" value="1"/>
</dbReference>
<comment type="function">
    <text evidence="1">Involved in base excision repair of DNA damaged by oxidation or by mutagenic agents. Acts as a DNA glycosylase that recognizes and removes damaged bases. Has a preference for oxidized purines, such as 7,8-dihydro-8-oxoguanine (8-oxoG). Has AP (apurinic/apyrimidinic) lyase activity and introduces nicks in the DNA strand. Cleaves the DNA backbone by beta-delta elimination to generate a single-strand break at the site of the removed base with both 3'- and 5'-phosphates (By similarity).</text>
</comment>
<comment type="catalytic activity">
    <reaction>
        <text>Hydrolysis of DNA containing ring-opened 7-methylguanine residues, releasing 2,6-diamino-4-hydroxy-5-(N-methyl)formamidopyrimidine.</text>
        <dbReference type="EC" id="3.2.2.23"/>
    </reaction>
</comment>
<comment type="catalytic activity">
    <reaction>
        <text>2'-deoxyribonucleotide-(2'-deoxyribose 5'-phosphate)-2'-deoxyribonucleotide-DNA = a 3'-end 2'-deoxyribonucleotide-(2,3-dehydro-2,3-deoxyribose 5'-phosphate)-DNA + a 5'-end 5'-phospho-2'-deoxyribonucleoside-DNA + H(+)</text>
        <dbReference type="Rhea" id="RHEA:66592"/>
        <dbReference type="Rhea" id="RHEA-COMP:13180"/>
        <dbReference type="Rhea" id="RHEA-COMP:16897"/>
        <dbReference type="Rhea" id="RHEA-COMP:17067"/>
        <dbReference type="ChEBI" id="CHEBI:15378"/>
        <dbReference type="ChEBI" id="CHEBI:136412"/>
        <dbReference type="ChEBI" id="CHEBI:157695"/>
        <dbReference type="ChEBI" id="CHEBI:167181"/>
        <dbReference type="EC" id="4.2.99.18"/>
    </reaction>
</comment>
<comment type="cofactor">
    <cofactor evidence="1">
        <name>Zn(2+)</name>
        <dbReference type="ChEBI" id="CHEBI:29105"/>
    </cofactor>
    <text evidence="1">Binds 1 zinc ion per subunit.</text>
</comment>
<comment type="subunit">
    <text evidence="1">Monomer.</text>
</comment>
<comment type="similarity">
    <text evidence="2">Belongs to the FPG family.</text>
</comment>
<feature type="initiator methionine" description="Removed" evidence="1">
    <location>
        <position position="1"/>
    </location>
</feature>
<feature type="chain" id="PRO_0000170805" description="Formamidopyrimidine-DNA glycosylase">
    <location>
        <begin position="2"/>
        <end position="298"/>
    </location>
</feature>
<feature type="zinc finger region" description="FPG-type">
    <location>
        <begin position="262"/>
        <end position="298"/>
    </location>
</feature>
<feature type="active site" description="Schiff-base intermediate with DNA" evidence="1">
    <location>
        <position position="2"/>
    </location>
</feature>
<feature type="active site" description="Proton donor" evidence="1">
    <location>
        <position position="3"/>
    </location>
</feature>
<feature type="active site" description="Proton donor; for beta-elimination activity" evidence="1">
    <location>
        <position position="58"/>
    </location>
</feature>
<feature type="active site" description="Proton donor; for delta-elimination activity" evidence="1">
    <location>
        <position position="288"/>
    </location>
</feature>
<feature type="binding site" evidence="1">
    <location>
        <position position="106"/>
    </location>
    <ligand>
        <name>DNA</name>
        <dbReference type="ChEBI" id="CHEBI:16991"/>
    </ligand>
</feature>
<feature type="binding site" evidence="1">
    <location>
        <position position="128"/>
    </location>
    <ligand>
        <name>DNA</name>
        <dbReference type="ChEBI" id="CHEBI:16991"/>
    </ligand>
</feature>
<feature type="binding site" evidence="1">
    <location>
        <position position="171"/>
    </location>
    <ligand>
        <name>DNA</name>
        <dbReference type="ChEBI" id="CHEBI:16991"/>
    </ligand>
</feature>